<organism>
    <name type="scientific">Haloarcula vallismortis</name>
    <name type="common">Halobacterium vallismortis</name>
    <dbReference type="NCBI Taxonomy" id="28442"/>
    <lineage>
        <taxon>Archaea</taxon>
        <taxon>Methanobacteriati</taxon>
        <taxon>Methanobacteriota</taxon>
        <taxon>Stenosarchaea group</taxon>
        <taxon>Halobacteria</taxon>
        <taxon>Halobacteriales</taxon>
        <taxon>Haloarculaceae</taxon>
        <taxon>Haloarcula</taxon>
    </lineage>
</organism>
<name>HTR2_HALVA</name>
<sequence length="433" mass="45935">EDEFGTLYAAFDNMRANLRTQISEAETAKQEAEAAKEQAQAAREDVESERNEMEALTGHLELKAQQYSDALDAAANGDLTARVKTDSMNDAMAEVGEDINTTLDALEDTIADMKAFATNVIQSSDRVNSNAERVDRASKQVSKSINEIFEGTTEQNEGLESAAAEMQNLSATAQQVASSAQQVADTSQSAAKVGEDGREAAQEAIAEMSAIEAETGETVEEINALDDELDEIGEIVGVITSIVEQTNMLALNASIEAAHADGDGEGFAVVADEIKGLAEETKEAAADIEGRIEAIQEQAGDTVETMESTSTRITEGVSTVEETVDALETIVEYTEEVDTGIQEIDRATEEQARTAQDVMGTIDDLTTISQQTATEADTVAGAAQDQSASIEEVSDSATELRQRADDLESLLDRFTVENSAGTGTDSTAAVGDD</sequence>
<accession>P42258</accession>
<gene>
    <name type="primary">htrII</name>
</gene>
<proteinExistence type="inferred from homology"/>
<keyword id="KW-1003">Cell membrane</keyword>
<keyword id="KW-0145">Chemotaxis</keyword>
<keyword id="KW-0157">Chromophore</keyword>
<keyword id="KW-0472">Membrane</keyword>
<keyword id="KW-0488">Methylation</keyword>
<keyword id="KW-0600">Photoreceptor protein</keyword>
<keyword id="KW-0675">Receptor</keyword>
<keyword id="KW-0716">Sensory transduction</keyword>
<keyword id="KW-0807">Transducer</keyword>
<keyword id="KW-0812">Transmembrane</keyword>
<evidence type="ECO:0000250" key="1"/>
<evidence type="ECO:0000255" key="2">
    <source>
        <dbReference type="PROSITE-ProRule" id="PRU00102"/>
    </source>
</evidence>
<evidence type="ECO:0000255" key="3">
    <source>
        <dbReference type="PROSITE-ProRule" id="PRU00284"/>
    </source>
</evidence>
<evidence type="ECO:0000256" key="4">
    <source>
        <dbReference type="SAM" id="MobiDB-lite"/>
    </source>
</evidence>
<evidence type="ECO:0000305" key="5"/>
<feature type="chain" id="PRO_0000110554" description="Sensory rhodopsin II transducer">
    <location>
        <begin position="1" status="less than"/>
        <end position="433"/>
    </location>
</feature>
<feature type="domain" description="HAMP" evidence="2">
    <location>
        <begin position="58"/>
        <end position="111"/>
    </location>
</feature>
<feature type="domain" description="Methyl-accepting transducer" evidence="3">
    <location>
        <begin position="130"/>
        <end position="366"/>
    </location>
</feature>
<feature type="region of interest" description="Disordered" evidence="4">
    <location>
        <begin position="24"/>
        <end position="48"/>
    </location>
</feature>
<feature type="region of interest" description="Disordered" evidence="4">
    <location>
        <begin position="379"/>
        <end position="400"/>
    </location>
</feature>
<feature type="compositionally biased region" description="Basic and acidic residues" evidence="4">
    <location>
        <begin position="26"/>
        <end position="48"/>
    </location>
</feature>
<feature type="compositionally biased region" description="Polar residues" evidence="4">
    <location>
        <begin position="384"/>
        <end position="397"/>
    </location>
</feature>
<feature type="non-terminal residue">
    <location>
        <position position="1"/>
    </location>
</feature>
<protein>
    <recommendedName>
        <fullName>Sensory rhodopsin II transducer</fullName>
    </recommendedName>
    <alternativeName>
        <fullName>HTR-II</fullName>
    </alternativeName>
    <alternativeName>
        <fullName>Methyl-accepting phototaxis protein II</fullName>
        <shortName>MPP-II</shortName>
    </alternativeName>
</protein>
<dbReference type="EMBL" id="Z35308">
    <property type="protein sequence ID" value="CAA84549.1"/>
    <property type="molecule type" value="Genomic_DNA"/>
</dbReference>
<dbReference type="SMR" id="P42258"/>
<dbReference type="STRING" id="28442.SAMN05443574_101537"/>
<dbReference type="GO" id="GO:0005886">
    <property type="term" value="C:plasma membrane"/>
    <property type="evidence" value="ECO:0007669"/>
    <property type="project" value="UniProtKB-SubCell"/>
</dbReference>
<dbReference type="GO" id="GO:0009881">
    <property type="term" value="F:photoreceptor activity"/>
    <property type="evidence" value="ECO:0007669"/>
    <property type="project" value="UniProtKB-KW"/>
</dbReference>
<dbReference type="GO" id="GO:0004888">
    <property type="term" value="F:transmembrane signaling receptor activity"/>
    <property type="evidence" value="ECO:0007669"/>
    <property type="project" value="InterPro"/>
</dbReference>
<dbReference type="GO" id="GO:0006935">
    <property type="term" value="P:chemotaxis"/>
    <property type="evidence" value="ECO:0007669"/>
    <property type="project" value="UniProtKB-KW"/>
</dbReference>
<dbReference type="GO" id="GO:0007165">
    <property type="term" value="P:signal transduction"/>
    <property type="evidence" value="ECO:0007669"/>
    <property type="project" value="UniProtKB-KW"/>
</dbReference>
<dbReference type="CDD" id="cd11386">
    <property type="entry name" value="MCP_signal"/>
    <property type="match status" value="1"/>
</dbReference>
<dbReference type="Gene3D" id="6.10.250.1910">
    <property type="match status" value="1"/>
</dbReference>
<dbReference type="Gene3D" id="1.10.287.950">
    <property type="entry name" value="Methyl-accepting chemotaxis protein"/>
    <property type="match status" value="1"/>
</dbReference>
<dbReference type="InterPro" id="IPR004090">
    <property type="entry name" value="Chemotax_Me-accpt_rcpt"/>
</dbReference>
<dbReference type="InterPro" id="IPR003660">
    <property type="entry name" value="HAMP_dom"/>
</dbReference>
<dbReference type="InterPro" id="IPR004089">
    <property type="entry name" value="MCPsignal_dom"/>
</dbReference>
<dbReference type="PANTHER" id="PTHR32089:SF112">
    <property type="entry name" value="LYSOZYME-LIKE PROTEIN-RELATED"/>
    <property type="match status" value="1"/>
</dbReference>
<dbReference type="PANTHER" id="PTHR32089">
    <property type="entry name" value="METHYL-ACCEPTING CHEMOTAXIS PROTEIN MCPB"/>
    <property type="match status" value="1"/>
</dbReference>
<dbReference type="Pfam" id="PF00015">
    <property type="entry name" value="MCPsignal"/>
    <property type="match status" value="1"/>
</dbReference>
<dbReference type="PRINTS" id="PR00260">
    <property type="entry name" value="CHEMTRNSDUCR"/>
</dbReference>
<dbReference type="SMART" id="SM00304">
    <property type="entry name" value="HAMP"/>
    <property type="match status" value="1"/>
</dbReference>
<dbReference type="SMART" id="SM00283">
    <property type="entry name" value="MA"/>
    <property type="match status" value="1"/>
</dbReference>
<dbReference type="SUPFAM" id="SSF58104">
    <property type="entry name" value="Methyl-accepting chemotaxis protein (MCP) signaling domain"/>
    <property type="match status" value="1"/>
</dbReference>
<dbReference type="PROSITE" id="PS50111">
    <property type="entry name" value="CHEMOTAXIS_TRANSDUC_2"/>
    <property type="match status" value="1"/>
</dbReference>
<dbReference type="PROSITE" id="PS50885">
    <property type="entry name" value="HAMP"/>
    <property type="match status" value="1"/>
</dbReference>
<reference key="1">
    <citation type="journal article" date="1995" name="Proc. Natl. Acad. Sci. U.S.A.">
        <title>The primary structure of sensory rhodopsin II: a member of an additional retinal protein subgroup is coexpressed with its transducer, the halobacterial transducer of rhodopsin II.</title>
        <authorList>
            <person name="Seidel R."/>
            <person name="Scharf B."/>
            <person name="Gautel M."/>
            <person name="Kleine K."/>
            <person name="Oesterhelt D."/>
            <person name="Engelhard M."/>
        </authorList>
    </citation>
    <scope>NUCLEOTIDE SEQUENCE [GENOMIC DNA]</scope>
    <source>
        <strain>ATCC 29715 / DSM 3756 / JCM 8877 / NBRC 14741 / NCIMB 2082</strain>
    </source>
</reference>
<comment type="function">
    <text>Transduces signals from the phototaxis receptor sensory rhodopsin II (SR-II) to the flagellar motor. Responds to light changes through the variation of the level of methylation. Also acts as a chemotransducer.</text>
</comment>
<comment type="subcellular location">
    <subcellularLocation>
        <location evidence="1">Cell membrane</location>
        <topology evidence="1">Multi-pass membrane protein</topology>
    </subcellularLocation>
</comment>
<comment type="similarity">
    <text evidence="5">Belongs to the methyl-accepting chemotaxis (MCP) protein family.</text>
</comment>